<feature type="chain" id="PRO_0000324678" description="Peroxidase 1">
    <location>
        <begin position="1" status="less than"/>
        <end position="46" status="greater than"/>
    </location>
</feature>
<feature type="non-consecutive residues" evidence="4">
    <location>
        <begin position="24"/>
        <end position="25"/>
    </location>
</feature>
<feature type="non-terminal residue">
    <location>
        <position position="1"/>
    </location>
</feature>
<feature type="non-terminal residue">
    <location>
        <position position="46"/>
    </location>
</feature>
<reference evidence="4" key="1">
    <citation type="submission" date="2008-01" db="UniProtKB">
        <authorList>
            <person name="Varman P.A.M."/>
            <person name="Ranjitha Kumari B.D."/>
        </authorList>
    </citation>
    <scope>PROTEIN SEQUENCE</scope>
</reference>
<name>PER1_CATRO</name>
<proteinExistence type="evidence at protein level"/>
<dbReference type="EC" id="1.11.1.7"/>
<dbReference type="GO" id="GO:0005576">
    <property type="term" value="C:extracellular region"/>
    <property type="evidence" value="ECO:0007669"/>
    <property type="project" value="UniProtKB-SubCell"/>
</dbReference>
<dbReference type="GO" id="GO:0140825">
    <property type="term" value="F:lactoperoxidase activity"/>
    <property type="evidence" value="ECO:0007669"/>
    <property type="project" value="UniProtKB-EC"/>
</dbReference>
<dbReference type="GO" id="GO:0046872">
    <property type="term" value="F:metal ion binding"/>
    <property type="evidence" value="ECO:0007669"/>
    <property type="project" value="UniProtKB-KW"/>
</dbReference>
<sequence length="46" mass="4764">LVCFVVVVFMAAAAAMAGADRELKYLSHGGVDFPVPAGRLDGVVSR</sequence>
<protein>
    <recommendedName>
        <fullName>Peroxidase 1</fullName>
        <ecNumber>1.11.1.7</ecNumber>
    </recommendedName>
</protein>
<organism>
    <name type="scientific">Catharanthus roseus</name>
    <name type="common">Madagascar periwinkle</name>
    <name type="synonym">Vinca rosea</name>
    <dbReference type="NCBI Taxonomy" id="4058"/>
    <lineage>
        <taxon>Eukaryota</taxon>
        <taxon>Viridiplantae</taxon>
        <taxon>Streptophyta</taxon>
        <taxon>Embryophyta</taxon>
        <taxon>Tracheophyta</taxon>
        <taxon>Spermatophyta</taxon>
        <taxon>Magnoliopsida</taxon>
        <taxon>eudicotyledons</taxon>
        <taxon>Gunneridae</taxon>
        <taxon>Pentapetalae</taxon>
        <taxon>asterids</taxon>
        <taxon>lamiids</taxon>
        <taxon>Gentianales</taxon>
        <taxon>Apocynaceae</taxon>
        <taxon>Rauvolfioideae</taxon>
        <taxon>Vinceae</taxon>
        <taxon>Catharanthinae</taxon>
        <taxon>Catharanthus</taxon>
    </lineage>
</organism>
<keyword id="KW-0106">Calcium</keyword>
<keyword id="KW-0903">Direct protein sequencing</keyword>
<keyword id="KW-0349">Heme</keyword>
<keyword id="KW-0408">Iron</keyword>
<keyword id="KW-0479">Metal-binding</keyword>
<keyword id="KW-0560">Oxidoreductase</keyword>
<keyword id="KW-0575">Peroxidase</keyword>
<keyword id="KW-0964">Secreted</keyword>
<evidence type="ECO:0000250" key="1">
    <source>
        <dbReference type="UniProtKB" id="P22195"/>
    </source>
</evidence>
<evidence type="ECO:0000250" key="2">
    <source>
        <dbReference type="UniProtKB" id="P84516"/>
    </source>
</evidence>
<evidence type="ECO:0000255" key="3">
    <source>
        <dbReference type="PROSITE-ProRule" id="PRU00297"/>
    </source>
</evidence>
<evidence type="ECO:0000305" key="4"/>
<comment type="function">
    <text evidence="4">Removal of H(2)O(2), oxidation of toxic reductants, biosynthesis and degradation of lignin, suberization, auxin catabolism, response to environmental stresses such as wounding, pathogen attack and oxidative stress. These functions might be dependent on each isozyme/isoform in each plant tissue.</text>
</comment>
<comment type="catalytic activity">
    <reaction>
        <text>2 a phenolic donor + H2O2 = 2 a phenolic radical donor + 2 H2O</text>
        <dbReference type="Rhea" id="RHEA:56136"/>
        <dbReference type="ChEBI" id="CHEBI:15377"/>
        <dbReference type="ChEBI" id="CHEBI:16240"/>
        <dbReference type="ChEBI" id="CHEBI:139520"/>
        <dbReference type="ChEBI" id="CHEBI:139521"/>
        <dbReference type="EC" id="1.11.1.7"/>
    </reaction>
</comment>
<comment type="cofactor">
    <cofactor evidence="1 3">
        <name>heme b</name>
        <dbReference type="ChEBI" id="CHEBI:60344"/>
    </cofactor>
    <text evidence="1 3">Binds 1 heme b (iron(II)-protoporphyrin IX) group per subunit.</text>
</comment>
<comment type="cofactor">
    <cofactor evidence="1 3">
        <name>Ca(2+)</name>
        <dbReference type="ChEBI" id="CHEBI:29108"/>
    </cofactor>
    <text evidence="1 3">Binds 2 calcium ions per subunit.</text>
</comment>
<comment type="subcellular location">
    <subcellularLocation>
        <location evidence="2 3">Secreted</location>
    </subcellularLocation>
</comment>
<comment type="similarity">
    <text evidence="3">Belongs to the peroxidase family. Classical plant (class III) peroxidase subfamily.</text>
</comment>
<accession>P85439</accession>